<sequence>MKTQFAILMITVVLMQMLVQTEGGILGKLWEGVKSIFGKRGLKNLDQLDDSFDSDLSDADVKLLREMFK</sequence>
<protein>
    <recommendedName>
        <fullName evidence="5">Amphipathic peptide Hp1404</fullName>
    </recommendedName>
</protein>
<dbReference type="SMR" id="P0DX64"/>
<dbReference type="GO" id="GO:0005576">
    <property type="term" value="C:extracellular region"/>
    <property type="evidence" value="ECO:0007669"/>
    <property type="project" value="UniProtKB-SubCell"/>
</dbReference>
<dbReference type="GO" id="GO:0016020">
    <property type="term" value="C:membrane"/>
    <property type="evidence" value="ECO:0007669"/>
    <property type="project" value="UniProtKB-KW"/>
</dbReference>
<dbReference type="GO" id="GO:0044218">
    <property type="term" value="C:other organism cell membrane"/>
    <property type="evidence" value="ECO:0007669"/>
    <property type="project" value="UniProtKB-KW"/>
</dbReference>
<dbReference type="GO" id="GO:0042742">
    <property type="term" value="P:defense response to bacterium"/>
    <property type="evidence" value="ECO:0007669"/>
    <property type="project" value="UniProtKB-KW"/>
</dbReference>
<dbReference type="GO" id="GO:0031640">
    <property type="term" value="P:killing of cells of another organism"/>
    <property type="evidence" value="ECO:0007669"/>
    <property type="project" value="UniProtKB-KW"/>
</dbReference>
<keyword id="KW-0027">Amidation</keyword>
<keyword id="KW-0044">Antibiotic</keyword>
<keyword id="KW-0929">Antimicrobial</keyword>
<keyword id="KW-0165">Cleavage on pair of basic residues</keyword>
<keyword id="KW-0204">Cytolysis</keyword>
<keyword id="KW-0472">Membrane</keyword>
<keyword id="KW-0964">Secreted</keyword>
<keyword id="KW-0732">Signal</keyword>
<keyword id="KW-1052">Target cell membrane</keyword>
<keyword id="KW-1053">Target membrane</keyword>
<evidence type="ECO:0000255" key="1"/>
<evidence type="ECO:0000269" key="2">
    <source>
    </source>
</evidence>
<evidence type="ECO:0000269" key="3">
    <source>
    </source>
</evidence>
<evidence type="ECO:0000269" key="4">
    <source>
    </source>
</evidence>
<evidence type="ECO:0000303" key="5">
    <source>
    </source>
</evidence>
<evidence type="ECO:0000305" key="6"/>
<evidence type="ECO:0000305" key="7">
    <source>
    </source>
</evidence>
<evidence type="ECO:0000305" key="8">
    <source>
    </source>
</evidence>
<evidence type="ECO:0000305" key="9">
    <source>
    </source>
</evidence>
<accession>P0DX64</accession>
<organism>
    <name type="scientific">Heterometrus petersii</name>
    <name type="common">Asian forest scorpion</name>
    <dbReference type="NCBI Taxonomy" id="754296"/>
    <lineage>
        <taxon>Eukaryota</taxon>
        <taxon>Metazoa</taxon>
        <taxon>Ecdysozoa</taxon>
        <taxon>Arthropoda</taxon>
        <taxon>Chelicerata</taxon>
        <taxon>Arachnida</taxon>
        <taxon>Scorpiones</taxon>
        <taxon>Iurida</taxon>
        <taxon>Scorpionoidea</taxon>
        <taxon>Scorpionidae</taxon>
        <taxon>Heterometrinae</taxon>
        <taxon>Heterometrus</taxon>
    </lineage>
</organism>
<comment type="function">
    <text evidence="2 3">Antimicrobial peptide that acts by inducing concentration-dependent membrane disruption, implying a membrane-lytic mode of action (PubMed:24826994, PubMed:29379033, PubMed:34022355). Acts with potent activity against Gram-positive bacteria (MIC=4.04-16.16 uM) including methicillin-resistant S.aureus (MRSA) (PubMed:24826994). Its activity on Gram-negative bacteria is controversial. Li and colleagues (2014) describe no activity towards E.coli and P.aeruginosa, while Kim and colleagues (2018) describe a potent activity towards P.aeruginosa (MIC=3.13-12.5 uM), and Luo and colleagues (2021) describe a potent activity against antibiotic-sensitive and -resistant Acinetobacter baumannii strains (MIC=3.2-10 uM) (PubMed:24826994, PubMed:29379033, PubMed:34022355). On S.aureus, possibly acts by impairing an unknown intracellular target and/or by interacting with the membrane, leading to the lateral expansion of the membrane area at high MIC concentrations, resulting in the formation of mesosome-like structures that leads to cell lysis (PubMed:24826994). Shows moderate inhibition of P.aeruginosa biofilm formation (PubMed:29379033). Administration of this peptide at sub-MIC concentrations in multiple treatments does not lead to resistance in S.aureus (PubMed:24826994). Exhibits low toxicity and hemolytic activity against mammalian cell lines and BALB/c mice (PubMed:24826994, PubMed:34022355). In vivo, improves the survival rate of the MRSA infected BALB/c mice in the peritonitis model (PubMed:24826994).</text>
</comment>
<comment type="activity regulation">
    <text evidence="2">Antibacterial activity is decreased by serum.</text>
</comment>
<comment type="subcellular location">
    <subcellularLocation>
        <location evidence="7">Secreted</location>
    </subcellularLocation>
    <subcellularLocation>
        <location evidence="4 8">Target cell membrane</location>
    </subcellularLocation>
    <text evidence="8">Adopts an alpha-helical conformation in membrane-mimicking environments.</text>
</comment>
<comment type="tissue specificity">
    <text evidence="7">Expressed by the venom gland.</text>
</comment>
<comment type="domain">
    <text evidence="7 9">Amphipathic and cationic peptide with an alpha-helical structure.</text>
</comment>
<comment type="similarity">
    <text evidence="6">Belongs to the non-disulfide-bridged peptide (NDBP) superfamily. Short antimicrobial peptide (group 4) family.</text>
</comment>
<feature type="signal peptide" evidence="1">
    <location>
        <begin position="1"/>
        <end position="23"/>
    </location>
</feature>
<feature type="peptide" id="PRO_0000459169" description="Amphipathic peptide Hp1404" evidence="7">
    <location>
        <begin position="24"/>
        <end position="37"/>
    </location>
</feature>
<feature type="propeptide" id="PRO_0000459170" evidence="7">
    <location>
        <begin position="41"/>
        <end position="69"/>
    </location>
</feature>
<feature type="modified residue" description="Phenylalanine amide" evidence="7 9">
    <location>
        <position position="37"/>
    </location>
</feature>
<feature type="mutagenesis site" description="In Hp1404-T1e (amidated); increase of antibacterial activity towards most of P.aeruginosa strains tested, increase in antibiofilm activity, loss of hemolytic activity, decrease in cytotoxicity towards HaCaT cells, increase in proteolytic stability, and increase in salt resistance (imitation of physiological environments). This peptide kills bacteria in P.aeruginosa-infected mice." evidence="3">
    <original>GILGKLWEGVKSIF</original>
    <variation>ILKKLLKKVKKI</variation>
    <location>
        <begin position="24"/>
        <end position="37"/>
    </location>
</feature>
<proteinExistence type="evidence at protein level"/>
<reference key="1">
    <citation type="journal article" date="2014" name="PLoS ONE">
        <title>Hp1404, a new antimicrobial peptide from the scorpion Heterometrus petersii.</title>
        <authorList>
            <person name="Li Z."/>
            <person name="Xu X."/>
            <person name="Meng L."/>
            <person name="Zhang Q."/>
            <person name="Cao L."/>
            <person name="Li W."/>
            <person name="Wu Y."/>
            <person name="Cao Z."/>
        </authorList>
    </citation>
    <scope>NUCLEOTIDE SEQUENCE [MRNA]</scope>
    <scope>FUNCTION</scope>
    <scope>BIOASSAY</scope>
    <scope>SYNTHESIS OF 24-37</scope>
    <scope>PROBABLE AMIDATION AT PHE-37</scope>
    <scope>ACTIVITY REGULATION</scope>
    <scope>CIRCULAR DICHROISM ANALYSIS</scope>
    <source>
        <tissue>Venom gland</tissue>
    </source>
</reference>
<reference key="2">
    <citation type="journal article" date="2018" name="Sci. Rep.">
        <title>Mechanisms driving the antibacterial and antibiofilm properties of Hp1404 and its analogue peptides against multidrug-resistant Pseudomonas aeruginosa.</title>
        <authorList>
            <person name="Kim M.K."/>
            <person name="Kang H.K."/>
            <person name="Ko S.J."/>
            <person name="Hong M.J."/>
            <person name="Bang J.K."/>
            <person name="Seo C.H."/>
            <person name="Park Y."/>
        </authorList>
    </citation>
    <scope>FUNCTION</scope>
    <scope>MUTAGENESIS OF 24-GLY--PHE-37</scope>
</reference>
<reference key="3">
    <citation type="journal article" date="2021" name="Microb. Pathog.">
        <title>Identification of the scorpion venom-derived antimicrobial peptide Hp1404 as a new antimicrobial agent against carbapenem-resistant Acinetobacter baumannii.</title>
        <authorList>
            <person name="Luo X."/>
            <person name="Ye X."/>
            <person name="Ding L."/>
            <person name="Zhu W."/>
            <person name="Zhao Z."/>
            <person name="Luo D."/>
            <person name="Liu N."/>
            <person name="Sun L."/>
            <person name="Chen Z."/>
        </authorList>
    </citation>
    <scope>FUNCTION</scope>
    <scope>SYNTHESIS OF 24-37 (AMIDATED PEPTIDE)</scope>
</reference>
<name>NDB4_HETPE</name>